<gene>
    <name type="primary">chrnd</name>
</gene>
<reference key="1">
    <citation type="journal article" date="1982" name="Proc. Natl. Acad. Sci. U.S.A.">
        <title>Subunit structure of the acetylcholine receptor from Electrophorus electricus.</title>
        <authorList>
            <person name="Conti-Tronconi B.M."/>
            <person name="Hunkapiller M.W."/>
            <person name="Lindstrom J.M."/>
            <person name="Raftery M.A."/>
        </authorList>
    </citation>
    <scope>PROTEIN SEQUENCE</scope>
</reference>
<sequence length="26" mass="3242">RNEEERLINHLFKERGYNKELRPAQT</sequence>
<name>ACHD_ELEEL</name>
<dbReference type="PIR" id="D27262">
    <property type="entry name" value="D27262"/>
</dbReference>
<dbReference type="SMR" id="P09691"/>
<dbReference type="STRING" id="8005.ENSEEEP00000047132"/>
<dbReference type="Proteomes" id="UP000314983">
    <property type="component" value="Unassembled WGS sequence"/>
</dbReference>
<dbReference type="GO" id="GO:0045211">
    <property type="term" value="C:postsynaptic membrane"/>
    <property type="evidence" value="ECO:0007669"/>
    <property type="project" value="UniProtKB-SubCell"/>
</dbReference>
<dbReference type="GO" id="GO:0034220">
    <property type="term" value="P:monoatomic ion transmembrane transport"/>
    <property type="evidence" value="ECO:0007669"/>
    <property type="project" value="UniProtKB-KW"/>
</dbReference>
<comment type="function">
    <text>After binding acetylcholine, the AChR responds by an extensive change in conformation that affects all subunits and leads to opening of an ion-conducting channel across the plasma membrane.</text>
</comment>
<comment type="catalytic activity">
    <reaction evidence="1">
        <text>K(+)(in) = K(+)(out)</text>
        <dbReference type="Rhea" id="RHEA:29463"/>
        <dbReference type="ChEBI" id="CHEBI:29103"/>
    </reaction>
</comment>
<comment type="catalytic activity">
    <reaction evidence="1">
        <text>Na(+)(in) = Na(+)(out)</text>
        <dbReference type="Rhea" id="RHEA:34963"/>
        <dbReference type="ChEBI" id="CHEBI:29101"/>
    </reaction>
</comment>
<comment type="subunit">
    <text>Pentamer of two alpha chains, and one each of the beta, delta, and gamma chains.</text>
</comment>
<comment type="subcellular location">
    <subcellularLocation>
        <location>Postsynaptic cell membrane</location>
        <topology>Multi-pass membrane protein</topology>
    </subcellularLocation>
    <subcellularLocation>
        <location>Cell membrane</location>
        <topology>Multi-pass membrane protein</topology>
    </subcellularLocation>
</comment>
<comment type="similarity">
    <text evidence="2">Belongs to the ligand-gated ion channel (TC 1.A.9) family. Acetylcholine receptor (TC 1.A.9.1) subfamily.</text>
</comment>
<organism>
    <name type="scientific">Electrophorus electricus</name>
    <name type="common">Electric eel</name>
    <name type="synonym">Gymnotus electricus</name>
    <dbReference type="NCBI Taxonomy" id="8005"/>
    <lineage>
        <taxon>Eukaryota</taxon>
        <taxon>Metazoa</taxon>
        <taxon>Chordata</taxon>
        <taxon>Craniata</taxon>
        <taxon>Vertebrata</taxon>
        <taxon>Euteleostomi</taxon>
        <taxon>Actinopterygii</taxon>
        <taxon>Neopterygii</taxon>
        <taxon>Teleostei</taxon>
        <taxon>Ostariophysi</taxon>
        <taxon>Gymnotiformes</taxon>
        <taxon>Gymnotoidei</taxon>
        <taxon>Gymnotidae</taxon>
        <taxon>Electrophorus</taxon>
    </lineage>
</organism>
<evidence type="ECO:0000250" key="1">
    <source>
        <dbReference type="UniProtKB" id="P04759"/>
    </source>
</evidence>
<evidence type="ECO:0000305" key="2"/>
<proteinExistence type="evidence at protein level"/>
<accession>P09691</accession>
<feature type="chain" id="PRO_0000076978" description="Acetylcholine receptor subunit delta">
    <location>
        <begin position="1"/>
        <end position="26" status="greater than"/>
    </location>
</feature>
<feature type="non-terminal residue">
    <location>
        <position position="26"/>
    </location>
</feature>
<protein>
    <recommendedName>
        <fullName>Acetylcholine receptor subunit delta</fullName>
    </recommendedName>
</protein>
<keyword id="KW-1003">Cell membrane</keyword>
<keyword id="KW-0903">Direct protein sequencing</keyword>
<keyword id="KW-0407">Ion channel</keyword>
<keyword id="KW-0406">Ion transport</keyword>
<keyword id="KW-1071">Ligand-gated ion channel</keyword>
<keyword id="KW-0472">Membrane</keyword>
<keyword id="KW-0628">Postsynaptic cell membrane</keyword>
<keyword id="KW-0675">Receptor</keyword>
<keyword id="KW-1185">Reference proteome</keyword>
<keyword id="KW-0770">Synapse</keyword>
<keyword id="KW-0812">Transmembrane</keyword>
<keyword id="KW-0813">Transport</keyword>